<dbReference type="EC" id="2.4.2.9" evidence="1"/>
<dbReference type="EMBL" id="CP001025">
    <property type="protein sequence ID" value="ACB64688.1"/>
    <property type="molecule type" value="Genomic_DNA"/>
</dbReference>
<dbReference type="RefSeq" id="WP_006478229.1">
    <property type="nucleotide sequence ID" value="NC_010551.1"/>
</dbReference>
<dbReference type="SMR" id="B1YU48"/>
<dbReference type="GeneID" id="93028588"/>
<dbReference type="KEGG" id="bac:BamMC406_2209"/>
<dbReference type="HOGENOM" id="CLU_067096_2_2_4"/>
<dbReference type="OrthoDB" id="9781675at2"/>
<dbReference type="UniPathway" id="UPA00574">
    <property type="reaction ID" value="UER00636"/>
</dbReference>
<dbReference type="Proteomes" id="UP000001680">
    <property type="component" value="Chromosome 1"/>
</dbReference>
<dbReference type="GO" id="GO:0005525">
    <property type="term" value="F:GTP binding"/>
    <property type="evidence" value="ECO:0007669"/>
    <property type="project" value="UniProtKB-KW"/>
</dbReference>
<dbReference type="GO" id="GO:0000287">
    <property type="term" value="F:magnesium ion binding"/>
    <property type="evidence" value="ECO:0007669"/>
    <property type="project" value="UniProtKB-UniRule"/>
</dbReference>
<dbReference type="GO" id="GO:0004845">
    <property type="term" value="F:uracil phosphoribosyltransferase activity"/>
    <property type="evidence" value="ECO:0007669"/>
    <property type="project" value="UniProtKB-UniRule"/>
</dbReference>
<dbReference type="GO" id="GO:0044206">
    <property type="term" value="P:UMP salvage"/>
    <property type="evidence" value="ECO:0007669"/>
    <property type="project" value="UniProtKB-UniRule"/>
</dbReference>
<dbReference type="GO" id="GO:0006223">
    <property type="term" value="P:uracil salvage"/>
    <property type="evidence" value="ECO:0007669"/>
    <property type="project" value="InterPro"/>
</dbReference>
<dbReference type="CDD" id="cd06223">
    <property type="entry name" value="PRTases_typeI"/>
    <property type="match status" value="1"/>
</dbReference>
<dbReference type="FunFam" id="3.40.50.2020:FF:000003">
    <property type="entry name" value="Uracil phosphoribosyltransferase"/>
    <property type="match status" value="1"/>
</dbReference>
<dbReference type="Gene3D" id="3.40.50.2020">
    <property type="match status" value="1"/>
</dbReference>
<dbReference type="HAMAP" id="MF_01218_B">
    <property type="entry name" value="Upp_B"/>
    <property type="match status" value="1"/>
</dbReference>
<dbReference type="InterPro" id="IPR000836">
    <property type="entry name" value="PRibTrfase_dom"/>
</dbReference>
<dbReference type="InterPro" id="IPR029057">
    <property type="entry name" value="PRTase-like"/>
</dbReference>
<dbReference type="InterPro" id="IPR034332">
    <property type="entry name" value="Upp_B"/>
</dbReference>
<dbReference type="InterPro" id="IPR050054">
    <property type="entry name" value="UPRTase/APRTase"/>
</dbReference>
<dbReference type="InterPro" id="IPR005765">
    <property type="entry name" value="Ura_phspho_trans"/>
</dbReference>
<dbReference type="NCBIfam" id="NF001097">
    <property type="entry name" value="PRK00129.1"/>
    <property type="match status" value="1"/>
</dbReference>
<dbReference type="NCBIfam" id="TIGR01091">
    <property type="entry name" value="upp"/>
    <property type="match status" value="1"/>
</dbReference>
<dbReference type="PANTHER" id="PTHR32315">
    <property type="entry name" value="ADENINE PHOSPHORIBOSYLTRANSFERASE"/>
    <property type="match status" value="1"/>
</dbReference>
<dbReference type="PANTHER" id="PTHR32315:SF4">
    <property type="entry name" value="URACIL PHOSPHORIBOSYLTRANSFERASE, CHLOROPLASTIC"/>
    <property type="match status" value="1"/>
</dbReference>
<dbReference type="Pfam" id="PF14681">
    <property type="entry name" value="UPRTase"/>
    <property type="match status" value="1"/>
</dbReference>
<dbReference type="SUPFAM" id="SSF53271">
    <property type="entry name" value="PRTase-like"/>
    <property type="match status" value="1"/>
</dbReference>
<feature type="chain" id="PRO_1000139101" description="Uracil phosphoribosyltransferase">
    <location>
        <begin position="1"/>
        <end position="216"/>
    </location>
</feature>
<feature type="binding site" evidence="1">
    <location>
        <position position="85"/>
    </location>
    <ligand>
        <name>5-phospho-alpha-D-ribose 1-diphosphate</name>
        <dbReference type="ChEBI" id="CHEBI:58017"/>
    </ligand>
</feature>
<feature type="binding site" evidence="1">
    <location>
        <position position="110"/>
    </location>
    <ligand>
        <name>5-phospho-alpha-D-ribose 1-diphosphate</name>
        <dbReference type="ChEBI" id="CHEBI:58017"/>
    </ligand>
</feature>
<feature type="binding site" evidence="1">
    <location>
        <begin position="135"/>
        <end position="143"/>
    </location>
    <ligand>
        <name>5-phospho-alpha-D-ribose 1-diphosphate</name>
        <dbReference type="ChEBI" id="CHEBI:58017"/>
    </ligand>
</feature>
<feature type="binding site" evidence="1">
    <location>
        <position position="200"/>
    </location>
    <ligand>
        <name>uracil</name>
        <dbReference type="ChEBI" id="CHEBI:17568"/>
    </ligand>
</feature>
<feature type="binding site" evidence="1">
    <location>
        <begin position="205"/>
        <end position="207"/>
    </location>
    <ligand>
        <name>uracil</name>
        <dbReference type="ChEBI" id="CHEBI:17568"/>
    </ligand>
</feature>
<feature type="binding site" evidence="1">
    <location>
        <position position="206"/>
    </location>
    <ligand>
        <name>5-phospho-alpha-D-ribose 1-diphosphate</name>
        <dbReference type="ChEBI" id="CHEBI:58017"/>
    </ligand>
</feature>
<organism>
    <name type="scientific">Burkholderia ambifaria (strain MC40-6)</name>
    <dbReference type="NCBI Taxonomy" id="398577"/>
    <lineage>
        <taxon>Bacteria</taxon>
        <taxon>Pseudomonadati</taxon>
        <taxon>Pseudomonadota</taxon>
        <taxon>Betaproteobacteria</taxon>
        <taxon>Burkholderiales</taxon>
        <taxon>Burkholderiaceae</taxon>
        <taxon>Burkholderia</taxon>
        <taxon>Burkholderia cepacia complex</taxon>
    </lineage>
</organism>
<protein>
    <recommendedName>
        <fullName evidence="1">Uracil phosphoribosyltransferase</fullName>
        <ecNumber evidence="1">2.4.2.9</ecNumber>
    </recommendedName>
    <alternativeName>
        <fullName evidence="1">UMP pyrophosphorylase</fullName>
    </alternativeName>
    <alternativeName>
        <fullName evidence="1">UPRTase</fullName>
    </alternativeName>
</protein>
<accession>B1YU48</accession>
<comment type="function">
    <text evidence="1">Catalyzes the conversion of uracil and 5-phospho-alpha-D-ribose 1-diphosphate (PRPP) to UMP and diphosphate.</text>
</comment>
<comment type="catalytic activity">
    <reaction evidence="1">
        <text>UMP + diphosphate = 5-phospho-alpha-D-ribose 1-diphosphate + uracil</text>
        <dbReference type="Rhea" id="RHEA:13017"/>
        <dbReference type="ChEBI" id="CHEBI:17568"/>
        <dbReference type="ChEBI" id="CHEBI:33019"/>
        <dbReference type="ChEBI" id="CHEBI:57865"/>
        <dbReference type="ChEBI" id="CHEBI:58017"/>
        <dbReference type="EC" id="2.4.2.9"/>
    </reaction>
</comment>
<comment type="cofactor">
    <cofactor evidence="1">
        <name>Mg(2+)</name>
        <dbReference type="ChEBI" id="CHEBI:18420"/>
    </cofactor>
    <text evidence="1">Binds 1 Mg(2+) ion per subunit. The magnesium is bound as Mg-PRPP.</text>
</comment>
<comment type="activity regulation">
    <text evidence="1">Allosterically activated by GTP.</text>
</comment>
<comment type="pathway">
    <text evidence="1">Pyrimidine metabolism; UMP biosynthesis via salvage pathway; UMP from uracil: step 1/1.</text>
</comment>
<comment type="similarity">
    <text evidence="1">Belongs to the UPRTase family.</text>
</comment>
<name>UPP_BURA4</name>
<gene>
    <name evidence="1" type="primary">upp</name>
    <name type="ordered locus">BamMC406_2209</name>
</gene>
<sequence>MKQDSRFPNLFITDHPLIQHKLTHMRDKDTSTRTFRELLREITLLMGYEITRNLPITTKRVETPLVAVDAPVIAGKKLAIVPVLRAGIGMSDGLLDLVPSARVGHIGVYRAEDHRPVEYLVRLPDLEDRIFILCDPMVATGYSAVHAVDVLKRRNVPAANIMFVALVAAPEGVQVFQDAHPDVKLFVASLDSHLNEHAYIVPGLGDAGDRLFGTKN</sequence>
<evidence type="ECO:0000255" key="1">
    <source>
        <dbReference type="HAMAP-Rule" id="MF_01218"/>
    </source>
</evidence>
<keyword id="KW-0021">Allosteric enzyme</keyword>
<keyword id="KW-0328">Glycosyltransferase</keyword>
<keyword id="KW-0342">GTP-binding</keyword>
<keyword id="KW-0460">Magnesium</keyword>
<keyword id="KW-0547">Nucleotide-binding</keyword>
<keyword id="KW-0808">Transferase</keyword>
<proteinExistence type="inferred from homology"/>
<reference key="1">
    <citation type="submission" date="2008-04" db="EMBL/GenBank/DDBJ databases">
        <title>Complete sequence of chromosome 1 of Burkholderia ambifaria MC40-6.</title>
        <authorList>
            <person name="Copeland A."/>
            <person name="Lucas S."/>
            <person name="Lapidus A."/>
            <person name="Glavina del Rio T."/>
            <person name="Dalin E."/>
            <person name="Tice H."/>
            <person name="Pitluck S."/>
            <person name="Chain P."/>
            <person name="Malfatti S."/>
            <person name="Shin M."/>
            <person name="Vergez L."/>
            <person name="Lang D."/>
            <person name="Schmutz J."/>
            <person name="Larimer F."/>
            <person name="Land M."/>
            <person name="Hauser L."/>
            <person name="Kyrpides N."/>
            <person name="Lykidis A."/>
            <person name="Ramette A."/>
            <person name="Konstantinidis K."/>
            <person name="Tiedje J."/>
            <person name="Richardson P."/>
        </authorList>
    </citation>
    <scope>NUCLEOTIDE SEQUENCE [LARGE SCALE GENOMIC DNA]</scope>
    <source>
        <strain>MC40-6</strain>
    </source>
</reference>